<evidence type="ECO:0000250" key="1">
    <source>
        <dbReference type="UniProtKB" id="P30044"/>
    </source>
</evidence>
<evidence type="ECO:0000269" key="2">
    <source>
    </source>
</evidence>
<evidence type="ECO:0000269" key="3">
    <source ref="1"/>
</evidence>
<evidence type="ECO:0000303" key="4">
    <source ref="1"/>
</evidence>
<evidence type="ECO:0000305" key="5"/>
<gene>
    <name type="primary">PRDX5</name>
</gene>
<keyword id="KW-0049">Antioxidant</keyword>
<keyword id="KW-0963">Cytoplasm</keyword>
<keyword id="KW-0903">Direct protein sequencing</keyword>
<keyword id="KW-0496">Mitochondrion</keyword>
<keyword id="KW-0560">Oxidoreductase</keyword>
<keyword id="KW-0575">Peroxidase</keyword>
<keyword id="KW-0576">Peroxisome</keyword>
<keyword id="KW-0676">Redox-active center</keyword>
<keyword id="KW-1185">Reference proteome</keyword>
<dbReference type="EC" id="1.11.1.24" evidence="1"/>
<dbReference type="Proteomes" id="UP000286640">
    <property type="component" value="Unplaced"/>
</dbReference>
<dbReference type="GO" id="GO:0005739">
    <property type="term" value="C:mitochondrion"/>
    <property type="evidence" value="ECO:0007669"/>
    <property type="project" value="UniProtKB-SubCell"/>
</dbReference>
<dbReference type="GO" id="GO:0005782">
    <property type="term" value="C:peroxisomal matrix"/>
    <property type="evidence" value="ECO:0007669"/>
    <property type="project" value="UniProtKB-SubCell"/>
</dbReference>
<dbReference type="GO" id="GO:0140824">
    <property type="term" value="F:thioredoxin-dependent peroxiredoxin activity"/>
    <property type="evidence" value="ECO:0007669"/>
    <property type="project" value="UniProtKB-EC"/>
</dbReference>
<accession>P83200</accession>
<proteinExistence type="evidence at protein level"/>
<reference evidence="5" key="1">
    <citation type="submission" date="2001-12" db="UniProtKB">
        <title>Partial characterisation of antigenic sperm proteins in foxes (Vulpes vulpes).</title>
        <authorList>
            <person name="Verdier Y."/>
            <person name="Rouet N."/>
            <person name="Artois M."/>
            <person name="Boue F."/>
        </authorList>
    </citation>
    <scope>PROTEIN SEQUENCE</scope>
    <source>
        <tissue evidence="3">Sperm</tissue>
    </source>
</reference>
<reference key="2">
    <citation type="journal article" date="2002" name="J. Androl.">
        <title>Partial characterization of antigenic sperm proteins in foxes (Vulpes vulpes).</title>
        <authorList>
            <person name="Verdier Y."/>
            <person name="Rouet N."/>
            <person name="Artois M."/>
            <person name="Boue F."/>
        </authorList>
    </citation>
    <scope>IDENTIFICATION BY 2D-PAGE</scope>
</reference>
<protein>
    <recommendedName>
        <fullName>Peroxiredoxin-5</fullName>
        <ecNumber evidence="1">1.11.1.24</ecNumber>
    </recommendedName>
    <alternativeName>
        <fullName>Autoantigenic sperm protein 5</fullName>
    </alternativeName>
    <alternativeName>
        <fullName>Peroxiredoxin V</fullName>
        <shortName>Prx-V</shortName>
    </alternativeName>
    <alternativeName>
        <fullName>Thioredoxin peroxidase</fullName>
    </alternativeName>
    <alternativeName>
        <fullName evidence="5">Thioredoxin-dependent peroxiredoxin 5</fullName>
    </alternativeName>
    <alternativeName>
        <fullName>fSP5</fullName>
    </alternativeName>
</protein>
<name>PRDX5_VULVU</name>
<comment type="function">
    <text evidence="1">Thiol-specific peroxidase that catalyzes the reduction of hydrogen peroxide and organic hydroperoxides to water and alcohols, respectively. Plays a role in cell protection against oxidative stress by detoxifying peroxides and as sensor of hydrogen peroxide-mediated signaling events.</text>
</comment>
<comment type="catalytic activity">
    <reaction evidence="1">
        <text>a hydroperoxide + [thioredoxin]-dithiol = an alcohol + [thioredoxin]-disulfide + H2O</text>
        <dbReference type="Rhea" id="RHEA:62620"/>
        <dbReference type="Rhea" id="RHEA-COMP:10698"/>
        <dbReference type="Rhea" id="RHEA-COMP:10700"/>
        <dbReference type="ChEBI" id="CHEBI:15377"/>
        <dbReference type="ChEBI" id="CHEBI:29950"/>
        <dbReference type="ChEBI" id="CHEBI:30879"/>
        <dbReference type="ChEBI" id="CHEBI:35924"/>
        <dbReference type="ChEBI" id="CHEBI:50058"/>
        <dbReference type="EC" id="1.11.1.24"/>
    </reaction>
</comment>
<comment type="subunit">
    <text evidence="1">Monomer.</text>
</comment>
<comment type="subcellular location">
    <subcellularLocation>
        <location evidence="1">Mitochondrion</location>
    </subcellularLocation>
    <subcellularLocation>
        <location evidence="1">Cytoplasm</location>
    </subcellularLocation>
    <subcellularLocation>
        <location evidence="1">Peroxisome matrix</location>
    </subcellularLocation>
</comment>
<comment type="miscellaneous">
    <text evidence="2">On the 2D-gel the determined pI of this protein is: 5.8, its MW is: 16.9 kDa.</text>
</comment>
<comment type="miscellaneous">
    <text evidence="1">The active site is a conserved redox-active cysteine residue, the peroxidatic cysteine (C(P)), which makes the nucleophilic attack on the peroxide substrate. The peroxide oxidizes the C(P)-SH to cysteine sulfenic acid (C(P)-SOH), which then reacts with another cysteine residue, the resolving cysteine (C(R)), to form a disulfide bridge. The disulfide is subsequently reduced by an appropriate electron donor to complete the catalytic cycle. In this atypical 2-Cys Prx, C(R) is present in the same subunit to form an intramolecular disulfide. The disulfide is subsequently reduced by thioredoxin.</text>
</comment>
<comment type="similarity">
    <text evidence="5">Belongs to the peroxiredoxin family. Prx5 subfamily.</text>
</comment>
<feature type="chain" id="PRO_0000312688" description="Peroxiredoxin-5">
    <location>
        <begin position="1"/>
        <end position="16" status="greater than"/>
    </location>
</feature>
<feature type="non-terminal residue" evidence="4">
    <location>
        <position position="16"/>
    </location>
</feature>
<organism>
    <name type="scientific">Vulpes vulpes</name>
    <name type="common">Red fox</name>
    <dbReference type="NCBI Taxonomy" id="9627"/>
    <lineage>
        <taxon>Eukaryota</taxon>
        <taxon>Metazoa</taxon>
        <taxon>Chordata</taxon>
        <taxon>Craniata</taxon>
        <taxon>Vertebrata</taxon>
        <taxon>Euteleostomi</taxon>
        <taxon>Mammalia</taxon>
        <taxon>Eutheria</taxon>
        <taxon>Laurasiatheria</taxon>
        <taxon>Carnivora</taxon>
        <taxon>Caniformia</taxon>
        <taxon>Canidae</taxon>
        <taxon>Vulpes</taxon>
    </lineage>
</organism>
<sequence>APIKVGDAIPXVXVFE</sequence>